<organism>
    <name type="scientific">Shewanella baltica (strain OS155 / ATCC BAA-1091)</name>
    <dbReference type="NCBI Taxonomy" id="325240"/>
    <lineage>
        <taxon>Bacteria</taxon>
        <taxon>Pseudomonadati</taxon>
        <taxon>Pseudomonadota</taxon>
        <taxon>Gammaproteobacteria</taxon>
        <taxon>Alteromonadales</taxon>
        <taxon>Shewanellaceae</taxon>
        <taxon>Shewanella</taxon>
    </lineage>
</organism>
<name>FADI_SHEB5</name>
<protein>
    <recommendedName>
        <fullName evidence="1">3-ketoacyl-CoA thiolase</fullName>
        <ecNumber evidence="1">2.3.1.16</ecNumber>
    </recommendedName>
    <alternativeName>
        <fullName evidence="1">ACSs</fullName>
    </alternativeName>
    <alternativeName>
        <fullName evidence="1">Acetyl-CoA acyltransferase</fullName>
    </alternativeName>
    <alternativeName>
        <fullName evidence="1">Acyl-CoA ligase</fullName>
    </alternativeName>
    <alternativeName>
        <fullName evidence="1">Beta-ketothiolase</fullName>
    </alternativeName>
    <alternativeName>
        <fullName evidence="1">Fatty acid oxidation complex subunit beta</fullName>
    </alternativeName>
</protein>
<proteinExistence type="inferred from homology"/>
<sequence length="436" mass="46750">MSDRQQVTNAKGERIAIVAGLRTPFAKQATAFHGVSALDMGKMVVNELLARSELDPKLIEQLVYGQVVQMPAAPNIAREIVLGTGMNVSTDAYSVTRACATSFQSAVNVAESIMTGNIEIGIAGGADSSSVLPIGVSKKLAHALVDLNKARSFGQKLQIFRRLGIKDLLPVPPAVAEYSTGLSMGQTAEQMAKTYNISRADQDALAHRSHTLASETWASGHLRDEVMVAHVPPYKQFIDRDNNIRENSVLESYAKLRPAFDKQHGTVTAANSTPLTDGASAIILMSEGRAKALGYQPIGYIKSYAFSAIDVWQDMLMGPSYATPLALKRAGMELEDLTLIEMHEAFAAQTLANMQMFASKKFAEEKLGRNRAIGEIDMSKFNVLGGSLAYGHPFAATGTRLITQVCRELKRRGGGTGLTTACAAGGLGVAMIVEVE</sequence>
<feature type="chain" id="PRO_1000069507" description="3-ketoacyl-CoA thiolase">
    <location>
        <begin position="1"/>
        <end position="436"/>
    </location>
</feature>
<feature type="active site" description="Acyl-thioester intermediate" evidence="1">
    <location>
        <position position="99"/>
    </location>
</feature>
<feature type="active site" description="Proton acceptor" evidence="1">
    <location>
        <position position="392"/>
    </location>
</feature>
<feature type="active site" description="Proton acceptor" evidence="1">
    <location>
        <position position="422"/>
    </location>
</feature>
<dbReference type="EC" id="2.3.1.16" evidence="1"/>
<dbReference type="EMBL" id="CP000563">
    <property type="protein sequence ID" value="ABN62248.1"/>
    <property type="molecule type" value="Genomic_DNA"/>
</dbReference>
<dbReference type="RefSeq" id="WP_006082247.1">
    <property type="nucleotide sequence ID" value="NC_009052.1"/>
</dbReference>
<dbReference type="SMR" id="A3D685"/>
<dbReference type="STRING" id="325240.Sbal_2761"/>
<dbReference type="GeneID" id="11772942"/>
<dbReference type="KEGG" id="sbl:Sbal_2761"/>
<dbReference type="HOGENOM" id="CLU_031026_2_0_6"/>
<dbReference type="OrthoDB" id="1402717at2"/>
<dbReference type="UniPathway" id="UPA00659"/>
<dbReference type="Proteomes" id="UP000001557">
    <property type="component" value="Chromosome"/>
</dbReference>
<dbReference type="GO" id="GO:0005829">
    <property type="term" value="C:cytosol"/>
    <property type="evidence" value="ECO:0007669"/>
    <property type="project" value="TreeGrafter"/>
</dbReference>
<dbReference type="GO" id="GO:0003988">
    <property type="term" value="F:acetyl-CoA C-acyltransferase activity"/>
    <property type="evidence" value="ECO:0007669"/>
    <property type="project" value="UniProtKB-UniRule"/>
</dbReference>
<dbReference type="GO" id="GO:0006635">
    <property type="term" value="P:fatty acid beta-oxidation"/>
    <property type="evidence" value="ECO:0007669"/>
    <property type="project" value="UniProtKB-UniRule"/>
</dbReference>
<dbReference type="CDD" id="cd00751">
    <property type="entry name" value="thiolase"/>
    <property type="match status" value="1"/>
</dbReference>
<dbReference type="FunFam" id="3.40.47.10:FF:000011">
    <property type="entry name" value="3-ketoacyl-CoA thiolase"/>
    <property type="match status" value="1"/>
</dbReference>
<dbReference type="Gene3D" id="3.40.47.10">
    <property type="match status" value="1"/>
</dbReference>
<dbReference type="HAMAP" id="MF_01618">
    <property type="entry name" value="FadI"/>
    <property type="match status" value="1"/>
</dbReference>
<dbReference type="InterPro" id="IPR050521">
    <property type="entry name" value="3-ketoacyl-CoA_Thiolase"/>
</dbReference>
<dbReference type="InterPro" id="IPR012806">
    <property type="entry name" value="Ac-CoA_C-AcTrfase_FadI"/>
</dbReference>
<dbReference type="InterPro" id="IPR002155">
    <property type="entry name" value="Thiolase"/>
</dbReference>
<dbReference type="InterPro" id="IPR016039">
    <property type="entry name" value="Thiolase-like"/>
</dbReference>
<dbReference type="InterPro" id="IPR020610">
    <property type="entry name" value="Thiolase_AS"/>
</dbReference>
<dbReference type="InterPro" id="IPR020617">
    <property type="entry name" value="Thiolase_C"/>
</dbReference>
<dbReference type="InterPro" id="IPR020613">
    <property type="entry name" value="Thiolase_CS"/>
</dbReference>
<dbReference type="InterPro" id="IPR020616">
    <property type="entry name" value="Thiolase_N"/>
</dbReference>
<dbReference type="NCBIfam" id="TIGR01930">
    <property type="entry name" value="AcCoA-C-Actrans"/>
    <property type="match status" value="1"/>
</dbReference>
<dbReference type="NCBIfam" id="TIGR02446">
    <property type="entry name" value="FadI"/>
    <property type="match status" value="1"/>
</dbReference>
<dbReference type="NCBIfam" id="NF006516">
    <property type="entry name" value="PRK08963.1"/>
    <property type="match status" value="1"/>
</dbReference>
<dbReference type="PANTHER" id="PTHR42689">
    <property type="entry name" value="ACETYL-COA ACYLTRANSFERASE FADA2 (3-KETOACYL-COA THIOLASE) (BETA-KETOTHIOLASE)-RELATED"/>
    <property type="match status" value="1"/>
</dbReference>
<dbReference type="PANTHER" id="PTHR42689:SF1">
    <property type="entry name" value="ACETYL-COA ACYLTRANSFERASE FADA2 (3-KETOACYL-COA THIOLASE) (BETA-KETOTHIOLASE)-RELATED"/>
    <property type="match status" value="1"/>
</dbReference>
<dbReference type="Pfam" id="PF02803">
    <property type="entry name" value="Thiolase_C"/>
    <property type="match status" value="1"/>
</dbReference>
<dbReference type="Pfam" id="PF00108">
    <property type="entry name" value="Thiolase_N"/>
    <property type="match status" value="1"/>
</dbReference>
<dbReference type="PIRSF" id="PIRSF000429">
    <property type="entry name" value="Ac-CoA_Ac_transf"/>
    <property type="match status" value="1"/>
</dbReference>
<dbReference type="SUPFAM" id="SSF53901">
    <property type="entry name" value="Thiolase-like"/>
    <property type="match status" value="2"/>
</dbReference>
<dbReference type="PROSITE" id="PS00737">
    <property type="entry name" value="THIOLASE_2"/>
    <property type="match status" value="1"/>
</dbReference>
<dbReference type="PROSITE" id="PS00099">
    <property type="entry name" value="THIOLASE_3"/>
    <property type="match status" value="1"/>
</dbReference>
<comment type="function">
    <text evidence="1">Catalyzes the final step of fatty acid oxidation in which acetyl-CoA is released and the CoA ester of a fatty acid two carbons shorter is formed.</text>
</comment>
<comment type="catalytic activity">
    <reaction evidence="1">
        <text>an acyl-CoA + acetyl-CoA = a 3-oxoacyl-CoA + CoA</text>
        <dbReference type="Rhea" id="RHEA:21564"/>
        <dbReference type="ChEBI" id="CHEBI:57287"/>
        <dbReference type="ChEBI" id="CHEBI:57288"/>
        <dbReference type="ChEBI" id="CHEBI:58342"/>
        <dbReference type="ChEBI" id="CHEBI:90726"/>
        <dbReference type="EC" id="2.3.1.16"/>
    </reaction>
</comment>
<comment type="pathway">
    <text evidence="1">Lipid metabolism; fatty acid beta-oxidation.</text>
</comment>
<comment type="subunit">
    <text evidence="1">Heterotetramer of two alpha chains (FadJ) and two beta chains (FadI).</text>
</comment>
<comment type="subcellular location">
    <subcellularLocation>
        <location evidence="1">Cytoplasm</location>
    </subcellularLocation>
</comment>
<comment type="similarity">
    <text evidence="1">Belongs to the thiolase-like superfamily. Thiolase family.</text>
</comment>
<accession>A3D685</accession>
<evidence type="ECO:0000255" key="1">
    <source>
        <dbReference type="HAMAP-Rule" id="MF_01618"/>
    </source>
</evidence>
<keyword id="KW-0012">Acyltransferase</keyword>
<keyword id="KW-0963">Cytoplasm</keyword>
<keyword id="KW-0276">Fatty acid metabolism</keyword>
<keyword id="KW-0442">Lipid degradation</keyword>
<keyword id="KW-0443">Lipid metabolism</keyword>
<keyword id="KW-1185">Reference proteome</keyword>
<keyword id="KW-0808">Transferase</keyword>
<reference key="1">
    <citation type="submission" date="2007-02" db="EMBL/GenBank/DDBJ databases">
        <title>Complete sequence of chromosome of Shewanella baltica OS155.</title>
        <authorList>
            <consortium name="US DOE Joint Genome Institute"/>
            <person name="Copeland A."/>
            <person name="Lucas S."/>
            <person name="Lapidus A."/>
            <person name="Barry K."/>
            <person name="Detter J.C."/>
            <person name="Glavina del Rio T."/>
            <person name="Hammon N."/>
            <person name="Israni S."/>
            <person name="Dalin E."/>
            <person name="Tice H."/>
            <person name="Pitluck S."/>
            <person name="Sims D.R."/>
            <person name="Brettin T."/>
            <person name="Bruce D."/>
            <person name="Han C."/>
            <person name="Tapia R."/>
            <person name="Brainard J."/>
            <person name="Schmutz J."/>
            <person name="Larimer F."/>
            <person name="Land M."/>
            <person name="Hauser L."/>
            <person name="Kyrpides N."/>
            <person name="Mikhailova N."/>
            <person name="Brettar I."/>
            <person name="Klappenbach J."/>
            <person name="Konstantinidis K."/>
            <person name="Rodrigues J."/>
            <person name="Tiedje J."/>
            <person name="Richardson P."/>
        </authorList>
    </citation>
    <scope>NUCLEOTIDE SEQUENCE [LARGE SCALE GENOMIC DNA]</scope>
    <source>
        <strain>OS155 / ATCC BAA-1091</strain>
    </source>
</reference>
<gene>
    <name evidence="1" type="primary">fadI</name>
    <name type="ordered locus">Sbal_2761</name>
</gene>